<protein>
    <recommendedName>
        <fullName evidence="4">Transcription factor MYB93</fullName>
    </recommendedName>
    <alternativeName>
        <fullName evidence="4">Myb-related protein 93</fullName>
        <shortName evidence="4">AtMYB93</shortName>
    </alternativeName>
</protein>
<evidence type="ECO:0000255" key="1">
    <source>
        <dbReference type="PROSITE-ProRule" id="PRU00625"/>
    </source>
</evidence>
<evidence type="ECO:0000269" key="2">
    <source>
    </source>
</evidence>
<evidence type="ECO:0000269" key="3">
    <source>
    </source>
</evidence>
<evidence type="ECO:0000303" key="4">
    <source>
    </source>
</evidence>
<evidence type="ECO:0000312" key="5">
    <source>
        <dbReference type="Araport" id="AT1G34670"/>
    </source>
</evidence>
<evidence type="ECO:0000312" key="6">
    <source>
        <dbReference type="EMBL" id="AAD46010.1"/>
    </source>
</evidence>
<keyword id="KW-0963">Cytoplasm</keyword>
<keyword id="KW-0238">DNA-binding</keyword>
<keyword id="KW-0341">Growth regulation</keyword>
<keyword id="KW-0539">Nucleus</keyword>
<keyword id="KW-1185">Reference proteome</keyword>
<keyword id="KW-0677">Repeat</keyword>
<keyword id="KW-0804">Transcription</keyword>
<keyword id="KW-0805">Transcription regulation</keyword>
<dbReference type="EMBL" id="AY519560">
    <property type="protein sequence ID" value="AAS10030.1"/>
    <property type="molecule type" value="mRNA"/>
</dbReference>
<dbReference type="EMBL" id="AC007894">
    <property type="protein sequence ID" value="AAD46010.1"/>
    <property type="molecule type" value="Genomic_DNA"/>
</dbReference>
<dbReference type="EMBL" id="CP002684">
    <property type="protein sequence ID" value="AEE31733.1"/>
    <property type="molecule type" value="Genomic_DNA"/>
</dbReference>
<dbReference type="PIR" id="D86470">
    <property type="entry name" value="D86470"/>
</dbReference>
<dbReference type="RefSeq" id="NP_174726.1">
    <property type="nucleotide sequence ID" value="NM_103190.2"/>
</dbReference>
<dbReference type="SMR" id="Q9S9Z2"/>
<dbReference type="FunCoup" id="Q9S9Z2">
    <property type="interactions" value="1"/>
</dbReference>
<dbReference type="IntAct" id="Q9S9Z2">
    <property type="interactions" value="5"/>
</dbReference>
<dbReference type="STRING" id="3702.Q9S9Z2"/>
<dbReference type="PaxDb" id="3702-AT1G34670.1"/>
<dbReference type="EnsemblPlants" id="AT1G34670.1">
    <property type="protein sequence ID" value="AT1G34670.1"/>
    <property type="gene ID" value="AT1G34670"/>
</dbReference>
<dbReference type="GeneID" id="840371"/>
<dbReference type="Gramene" id="AT1G34670.1">
    <property type="protein sequence ID" value="AT1G34670.1"/>
    <property type="gene ID" value="AT1G34670"/>
</dbReference>
<dbReference type="KEGG" id="ath:AT1G34670"/>
<dbReference type="Araport" id="AT1G34670"/>
<dbReference type="TAIR" id="AT1G34670">
    <property type="gene designation" value="MYB93"/>
</dbReference>
<dbReference type="eggNOG" id="KOG0048">
    <property type="taxonomic scope" value="Eukaryota"/>
</dbReference>
<dbReference type="HOGENOM" id="CLU_028567_15_4_1"/>
<dbReference type="InParanoid" id="Q9S9Z2"/>
<dbReference type="OMA" id="MVSWNKD"/>
<dbReference type="PhylomeDB" id="Q9S9Z2"/>
<dbReference type="PRO" id="PR:Q9S9Z2"/>
<dbReference type="Proteomes" id="UP000006548">
    <property type="component" value="Chromosome 1"/>
</dbReference>
<dbReference type="ExpressionAtlas" id="Q9S9Z2">
    <property type="expression patterns" value="baseline and differential"/>
</dbReference>
<dbReference type="GO" id="GO:0005737">
    <property type="term" value="C:cytoplasm"/>
    <property type="evidence" value="ECO:0000314"/>
    <property type="project" value="UniProtKB"/>
</dbReference>
<dbReference type="GO" id="GO:0005634">
    <property type="term" value="C:nucleus"/>
    <property type="evidence" value="ECO:0000314"/>
    <property type="project" value="UniProtKB"/>
</dbReference>
<dbReference type="GO" id="GO:0003700">
    <property type="term" value="F:DNA-binding transcription factor activity"/>
    <property type="evidence" value="ECO:0000314"/>
    <property type="project" value="TAIR"/>
</dbReference>
<dbReference type="GO" id="GO:0000976">
    <property type="term" value="F:transcription cis-regulatory region binding"/>
    <property type="evidence" value="ECO:0000353"/>
    <property type="project" value="TAIR"/>
</dbReference>
<dbReference type="GO" id="GO:0071365">
    <property type="term" value="P:cellular response to auxin stimulus"/>
    <property type="evidence" value="ECO:0000270"/>
    <property type="project" value="TAIR"/>
</dbReference>
<dbReference type="GO" id="GO:1901332">
    <property type="term" value="P:negative regulation of lateral root development"/>
    <property type="evidence" value="ECO:0000315"/>
    <property type="project" value="TAIR"/>
</dbReference>
<dbReference type="CDD" id="cd00167">
    <property type="entry name" value="SANT"/>
    <property type="match status" value="2"/>
</dbReference>
<dbReference type="FunFam" id="1.10.10.60:FF:000001">
    <property type="entry name" value="MYB-related transcription factor"/>
    <property type="match status" value="1"/>
</dbReference>
<dbReference type="FunFam" id="1.10.10.60:FF:000349">
    <property type="entry name" value="Transcription factor MYB39"/>
    <property type="match status" value="1"/>
</dbReference>
<dbReference type="Gene3D" id="1.10.10.60">
    <property type="entry name" value="Homeodomain-like"/>
    <property type="match status" value="2"/>
</dbReference>
<dbReference type="InterPro" id="IPR009057">
    <property type="entry name" value="Homeodomain-like_sf"/>
</dbReference>
<dbReference type="InterPro" id="IPR017930">
    <property type="entry name" value="Myb_dom"/>
</dbReference>
<dbReference type="InterPro" id="IPR015495">
    <property type="entry name" value="Myb_TF_plants"/>
</dbReference>
<dbReference type="InterPro" id="IPR001005">
    <property type="entry name" value="SANT/Myb"/>
</dbReference>
<dbReference type="PANTHER" id="PTHR47994">
    <property type="entry name" value="F14D16.11-RELATED"/>
    <property type="match status" value="1"/>
</dbReference>
<dbReference type="Pfam" id="PF00249">
    <property type="entry name" value="Myb_DNA-binding"/>
    <property type="match status" value="2"/>
</dbReference>
<dbReference type="SMART" id="SM00717">
    <property type="entry name" value="SANT"/>
    <property type="match status" value="2"/>
</dbReference>
<dbReference type="SUPFAM" id="SSF46689">
    <property type="entry name" value="Homeodomain-like"/>
    <property type="match status" value="1"/>
</dbReference>
<dbReference type="PROSITE" id="PS51294">
    <property type="entry name" value="HTH_MYB"/>
    <property type="match status" value="2"/>
</dbReference>
<feature type="chain" id="PRO_0000442927" description="Transcription factor MYB93">
    <location>
        <begin position="1"/>
        <end position="365"/>
    </location>
</feature>
<feature type="domain" description="HTH myb-type 1" evidence="1">
    <location>
        <begin position="9"/>
        <end position="61"/>
    </location>
</feature>
<feature type="domain" description="HTH myb-type 2" evidence="1">
    <location>
        <begin position="62"/>
        <end position="116"/>
    </location>
</feature>
<feature type="DNA-binding region" description="H-T-H motif" evidence="1">
    <location>
        <begin position="37"/>
        <end position="61"/>
    </location>
</feature>
<feature type="DNA-binding region" description="H-T-H motif" evidence="1">
    <location>
        <begin position="89"/>
        <end position="112"/>
    </location>
</feature>
<name>MYB93_ARATH</name>
<sequence>MGRSPCCDENGLKKGPWTPEEDQKLIDYIHKHGHGSWRALPKLADLNRCGKSCRLRWTNYLRPDIKRGKFSAEEEQTILHLHSILGNKWSAIATHLQGRTDNEIKNFWNTHLKKKLIQMGIDPVTHQPRTDLFASLPQLIALANLKDLIEQTSQFSSMQGEAAQLANLQYLQRMFNSSASLTNNNGNNFSPSSILDIDQHHAMNLLNSMVSWNKDQNPAFDPVLELEANDQNQDLFPLGFIIDQPTQPLQQQKYHLNNSPSELPSQGDPLLDHVPFSLQTPLNSEDHFIDNLVKHPTDHEHEHDDNPSSWVLPSLIDNNPKTVTSSLPHNNPADASSSSSYGGCEAASFYWPDICFDESLMNVIS</sequence>
<organism>
    <name type="scientific">Arabidopsis thaliana</name>
    <name type="common">Mouse-ear cress</name>
    <dbReference type="NCBI Taxonomy" id="3702"/>
    <lineage>
        <taxon>Eukaryota</taxon>
        <taxon>Viridiplantae</taxon>
        <taxon>Streptophyta</taxon>
        <taxon>Embryophyta</taxon>
        <taxon>Tracheophyta</taxon>
        <taxon>Spermatophyta</taxon>
        <taxon>Magnoliopsida</taxon>
        <taxon>eudicotyledons</taxon>
        <taxon>Gunneridae</taxon>
        <taxon>Pentapetalae</taxon>
        <taxon>rosids</taxon>
        <taxon>malvids</taxon>
        <taxon>Brassicales</taxon>
        <taxon>Brassicaceae</taxon>
        <taxon>Camelineae</taxon>
        <taxon>Arabidopsis</taxon>
    </lineage>
</organism>
<gene>
    <name evidence="4" type="primary">MYB93</name>
    <name evidence="5" type="ordered locus">At1g34670</name>
    <name evidence="6" type="ORF">F21H2.9</name>
</gene>
<comment type="function">
    <text evidence="2">Transcription factor that acts as a negative regulator of lateral root (LR) development. Required for normal auxin responses during LR development. May be part of a negative feedback loop stimulated specifically in the endodermis upon LR initiation to ensure that LRs are formed only in the correct place.</text>
</comment>
<comment type="subunit">
    <text evidence="2">Interacts with FBX5.</text>
</comment>
<comment type="interaction">
    <interactant intactId="EBI-15202792">
        <id>Q9S9Z2</id>
    </interactant>
    <interactant intactId="EBI-25511270">
        <id>Q9FX36</id>
        <label>MYB54</label>
    </interactant>
    <organismsDiffer>false</organismsDiffer>
    <experiments>3</experiments>
</comment>
<comment type="subcellular location">
    <subcellularLocation>
        <location evidence="1 2">Nucleus</location>
    </subcellularLocation>
    <subcellularLocation>
        <location evidence="2">Cytoplasm</location>
    </subcellularLocation>
</comment>
<comment type="developmental stage">
    <text evidence="2 3">Specifically and transiently expressed in root endodermal cells overlying the early stages of lateral root primordia formation.</text>
</comment>
<comment type="induction">
    <text evidence="2">Induced by abscisic acid (ABA), auxin and gravity in roots.</text>
</comment>
<comment type="disruption phenotype">
    <text evidence="2">High lateral root developmental progression and enhanced lateral root density.</text>
</comment>
<accession>Q9S9Z2</accession>
<reference key="1">
    <citation type="submission" date="2004-01" db="EMBL/GenBank/DDBJ databases">
        <title>The MYB transcription factor family in Arabidopsis: A genome-wide cloning and expression pattern analysis.</title>
        <authorList>
            <person name="Qu L."/>
            <person name="Gu H."/>
        </authorList>
    </citation>
    <scope>NUCLEOTIDE SEQUENCE [MRNA]</scope>
</reference>
<reference key="2">
    <citation type="journal article" date="2000" name="Nature">
        <title>Sequence and analysis of chromosome 1 of the plant Arabidopsis thaliana.</title>
        <authorList>
            <person name="Theologis A."/>
            <person name="Ecker J.R."/>
            <person name="Palm C.J."/>
            <person name="Federspiel N.A."/>
            <person name="Kaul S."/>
            <person name="White O."/>
            <person name="Alonso J."/>
            <person name="Altafi H."/>
            <person name="Araujo R."/>
            <person name="Bowman C.L."/>
            <person name="Brooks S.Y."/>
            <person name="Buehler E."/>
            <person name="Chan A."/>
            <person name="Chao Q."/>
            <person name="Chen H."/>
            <person name="Cheuk R.F."/>
            <person name="Chin C.W."/>
            <person name="Chung M.K."/>
            <person name="Conn L."/>
            <person name="Conway A.B."/>
            <person name="Conway A.R."/>
            <person name="Creasy T.H."/>
            <person name="Dewar K."/>
            <person name="Dunn P."/>
            <person name="Etgu P."/>
            <person name="Feldblyum T.V."/>
            <person name="Feng J.-D."/>
            <person name="Fong B."/>
            <person name="Fujii C.Y."/>
            <person name="Gill J.E."/>
            <person name="Goldsmith A.D."/>
            <person name="Haas B."/>
            <person name="Hansen N.F."/>
            <person name="Hughes B."/>
            <person name="Huizar L."/>
            <person name="Hunter J.L."/>
            <person name="Jenkins J."/>
            <person name="Johnson-Hopson C."/>
            <person name="Khan S."/>
            <person name="Khaykin E."/>
            <person name="Kim C.J."/>
            <person name="Koo H.L."/>
            <person name="Kremenetskaia I."/>
            <person name="Kurtz D.B."/>
            <person name="Kwan A."/>
            <person name="Lam B."/>
            <person name="Langin-Hooper S."/>
            <person name="Lee A."/>
            <person name="Lee J.M."/>
            <person name="Lenz C.A."/>
            <person name="Li J.H."/>
            <person name="Li Y.-P."/>
            <person name="Lin X."/>
            <person name="Liu S.X."/>
            <person name="Liu Z.A."/>
            <person name="Luros J.S."/>
            <person name="Maiti R."/>
            <person name="Marziali A."/>
            <person name="Militscher J."/>
            <person name="Miranda M."/>
            <person name="Nguyen M."/>
            <person name="Nierman W.C."/>
            <person name="Osborne B.I."/>
            <person name="Pai G."/>
            <person name="Peterson J."/>
            <person name="Pham P.K."/>
            <person name="Rizzo M."/>
            <person name="Rooney T."/>
            <person name="Rowley D."/>
            <person name="Sakano H."/>
            <person name="Salzberg S.L."/>
            <person name="Schwartz J.R."/>
            <person name="Shinn P."/>
            <person name="Southwick A.M."/>
            <person name="Sun H."/>
            <person name="Tallon L.J."/>
            <person name="Tambunga G."/>
            <person name="Toriumi M.J."/>
            <person name="Town C.D."/>
            <person name="Utterback T."/>
            <person name="Van Aken S."/>
            <person name="Vaysberg M."/>
            <person name="Vysotskaia V.S."/>
            <person name="Walker M."/>
            <person name="Wu D."/>
            <person name="Yu G."/>
            <person name="Fraser C.M."/>
            <person name="Venter J.C."/>
            <person name="Davis R.W."/>
        </authorList>
    </citation>
    <scope>NUCLEOTIDE SEQUENCE [LARGE SCALE GENOMIC DNA]</scope>
    <source>
        <strain>cv. Columbia</strain>
    </source>
</reference>
<reference key="3">
    <citation type="journal article" date="2017" name="Plant J.">
        <title>Araport11: a complete reannotation of the Arabidopsis thaliana reference genome.</title>
        <authorList>
            <person name="Cheng C.Y."/>
            <person name="Krishnakumar V."/>
            <person name="Chan A.P."/>
            <person name="Thibaud-Nissen F."/>
            <person name="Schobel S."/>
            <person name="Town C.D."/>
        </authorList>
    </citation>
    <scope>GENOME REANNOTATION</scope>
    <source>
        <strain>cv. Columbia</strain>
    </source>
</reference>
<reference key="4">
    <citation type="journal article" date="2001" name="Curr. Opin. Plant Biol.">
        <title>The R2R3-MYB gene family in Arabidopsis thaliana.</title>
        <authorList>
            <person name="Stracke R."/>
            <person name="Werber M."/>
            <person name="Weisshaar B."/>
        </authorList>
    </citation>
    <scope>GENE FAMILY</scope>
    <scope>NOMENCLATURE</scope>
</reference>
<reference key="5">
    <citation type="journal article" date="2014" name="New Phytol.">
        <title>AtMYB93 is a novel negative regulator of lateral root development in Arabidopsis.</title>
        <authorList>
            <person name="Gibbs D.J."/>
            <person name="Voss U."/>
            <person name="Harding S.A."/>
            <person name="Fannon J."/>
            <person name="Moody L.A."/>
            <person name="Yamada E."/>
            <person name="Swarup K."/>
            <person name="Nibau C."/>
            <person name="Bassel G.W."/>
            <person name="Choudhary A."/>
            <person name="Lavenus J."/>
            <person name="Bradshaw S.J."/>
            <person name="Stekel D.J."/>
            <person name="Bennett M.J."/>
            <person name="Coates J.C."/>
        </authorList>
    </citation>
    <scope>FUNCTION</scope>
    <scope>INTERACTION WITH FBX5</scope>
    <scope>SUBCELLULAR LOCATION</scope>
    <scope>DEVELOPMENTAL STAGE</scope>
    <scope>INDUCTION</scope>
    <scope>DISRUPTION PHENOTYPE</scope>
</reference>
<reference key="6">
    <citation type="journal article" date="2014" name="Plant Signal. Behav.">
        <title>AtMYB93 is an endodermis-specific transcriptional regulator of lateral root development in arabidopsis.</title>
        <authorList>
            <person name="Gibbs D.J."/>
            <person name="Coates J.C."/>
        </authorList>
    </citation>
    <scope>DEVELOPMENTAL STAGE</scope>
</reference>
<proteinExistence type="evidence at protein level"/>